<proteinExistence type="inferred from homology"/>
<protein>
    <recommendedName>
        <fullName evidence="1">Putative double-stranded DNA mimic protein HSM_1473</fullName>
    </recommendedName>
</protein>
<organism>
    <name type="scientific">Histophilus somni (strain 2336)</name>
    <name type="common">Haemophilus somnus</name>
    <dbReference type="NCBI Taxonomy" id="228400"/>
    <lineage>
        <taxon>Bacteria</taxon>
        <taxon>Pseudomonadati</taxon>
        <taxon>Pseudomonadota</taxon>
        <taxon>Gammaproteobacteria</taxon>
        <taxon>Pasteurellales</taxon>
        <taxon>Pasteurellaceae</taxon>
        <taxon>Histophilus</taxon>
    </lineage>
</organism>
<dbReference type="EMBL" id="CP000947">
    <property type="protein sequence ID" value="ACA31222.1"/>
    <property type="molecule type" value="Genomic_DNA"/>
</dbReference>
<dbReference type="RefSeq" id="WP_012340614.1">
    <property type="nucleotide sequence ID" value="NC_010519.1"/>
</dbReference>
<dbReference type="SMR" id="B0UUJ4"/>
<dbReference type="STRING" id="228400.HSM_1473"/>
<dbReference type="GeneID" id="31487771"/>
<dbReference type="KEGG" id="hsm:HSM_1473"/>
<dbReference type="HOGENOM" id="CLU_143392_0_0_6"/>
<dbReference type="Gene3D" id="3.10.450.140">
    <property type="entry name" value="dsDNA mimic, putative"/>
    <property type="match status" value="1"/>
</dbReference>
<dbReference type="HAMAP" id="MF_00680">
    <property type="entry name" value="Put_dsDNA_mimic"/>
    <property type="match status" value="1"/>
</dbReference>
<dbReference type="InterPro" id="IPR007376">
    <property type="entry name" value="dsDNA_mimic_put"/>
</dbReference>
<dbReference type="InterPro" id="IPR036763">
    <property type="entry name" value="Put_dsDNA_mimic_sf"/>
</dbReference>
<dbReference type="NCBIfam" id="NF003469">
    <property type="entry name" value="PRK05094.1"/>
    <property type="match status" value="1"/>
</dbReference>
<dbReference type="Pfam" id="PF04269">
    <property type="entry name" value="DUF440"/>
    <property type="match status" value="1"/>
</dbReference>
<dbReference type="PIRSF" id="PIRSF004916">
    <property type="entry name" value="UCP004916"/>
    <property type="match status" value="1"/>
</dbReference>
<dbReference type="SUPFAM" id="SSF102816">
    <property type="entry name" value="Putative dsDNA mimic"/>
    <property type="match status" value="1"/>
</dbReference>
<evidence type="ECO:0000255" key="1">
    <source>
        <dbReference type="HAMAP-Rule" id="MF_00680"/>
    </source>
</evidence>
<reference key="1">
    <citation type="submission" date="2008-02" db="EMBL/GenBank/DDBJ databases">
        <title>Complete sequence of Haemophilus somnus 2336.</title>
        <authorList>
            <consortium name="US DOE Joint Genome Institute"/>
            <person name="Siddaramappa S."/>
            <person name="Duncan A.J."/>
            <person name="Challacombe J.F."/>
            <person name="Rainey D."/>
            <person name="Gillaspy A.F."/>
            <person name="Carson M."/>
            <person name="Gipson J."/>
            <person name="Gipson M."/>
            <person name="Bruce D."/>
            <person name="Detter J.C."/>
            <person name="Han C.S."/>
            <person name="Land M."/>
            <person name="Tapia R."/>
            <person name="Thompson L.S."/>
            <person name="Orvis J."/>
            <person name="Zaitshik J."/>
            <person name="Barnes G."/>
            <person name="Brettin T.S."/>
            <person name="Dyer D.W."/>
            <person name="Inzana T.J."/>
        </authorList>
    </citation>
    <scope>NUCLEOTIDE SEQUENCE [LARGE SCALE GENOMIC DNA]</scope>
    <source>
        <strain>2336</strain>
    </source>
</reference>
<name>Y1473_HISS2</name>
<comment type="function">
    <text evidence="1">May act as a double-stranded DNA (dsDNA) mimic. Probably regulates the activity of a dsDNA-binding protein.</text>
</comment>
<comment type="similarity">
    <text evidence="1">Belongs to the putative dsDNA mimic protein family.</text>
</comment>
<sequence length="107" mass="12464">MTDQINKLDPDTAIDIAYDIFLEMAGENLDPADIILFNLQFEDHGGVEFVETADDWEQEIGVLIDPDEYAEVWVGLVNEQDEMDDIFAKFLISHKEEDREYHVVWKK</sequence>
<feature type="chain" id="PRO_1000131710" description="Putative double-stranded DNA mimic protein HSM_1473">
    <location>
        <begin position="1"/>
        <end position="107"/>
    </location>
</feature>
<gene>
    <name type="ordered locus">HSM_1473</name>
</gene>
<accession>B0UUJ4</accession>